<accession>P96175</accession>
<organism>
    <name type="scientific">Vibrio sp. (strain 2693)</name>
    <dbReference type="NCBI Taxonomy" id="79682"/>
    <lineage>
        <taxon>Bacteria</taxon>
        <taxon>Pseudomonadati</taxon>
        <taxon>Pseudomonadota</taxon>
        <taxon>Gammaproteobacteria</taxon>
        <taxon>Vibrionales</taxon>
        <taxon>Vibrionaceae</taxon>
        <taxon>Vibrio</taxon>
    </lineage>
</organism>
<protein>
    <recommendedName>
        <fullName>Aspartate carbamoyltransferase regulatory chain</fullName>
    </recommendedName>
</protein>
<comment type="function">
    <text evidence="1">Involved in allosteric regulation of aspartate carbamoyltransferase.</text>
</comment>
<comment type="cofactor">
    <cofactor evidence="1">
        <name>Zn(2+)</name>
        <dbReference type="ChEBI" id="CHEBI:29105"/>
    </cofactor>
    <text evidence="1">Binds 1 zinc ion per subunit.</text>
</comment>
<comment type="subunit">
    <text evidence="1">Contains catalytic and regulatory chains.</text>
</comment>
<comment type="similarity">
    <text evidence="2">Belongs to the PyrI family.</text>
</comment>
<keyword id="KW-0479">Metal-binding</keyword>
<keyword id="KW-0665">Pyrimidine biosynthesis</keyword>
<keyword id="KW-0862">Zinc</keyword>
<feature type="chain" id="PRO_0000142320" description="Aspartate carbamoyltransferase regulatory chain">
    <location>
        <begin position="1"/>
        <end position="153"/>
    </location>
</feature>
<feature type="binding site" evidence="1">
    <location>
        <position position="108"/>
    </location>
    <ligand>
        <name>Zn(2+)</name>
        <dbReference type="ChEBI" id="CHEBI:29105"/>
    </ligand>
</feature>
<feature type="binding site" evidence="1">
    <location>
        <position position="113"/>
    </location>
    <ligand>
        <name>Zn(2+)</name>
        <dbReference type="ChEBI" id="CHEBI:29105"/>
    </ligand>
</feature>
<feature type="binding site" evidence="1">
    <location>
        <position position="137"/>
    </location>
    <ligand>
        <name>Zn(2+)</name>
        <dbReference type="ChEBI" id="CHEBI:29105"/>
    </ligand>
</feature>
<feature type="binding site" evidence="1">
    <location>
        <position position="140"/>
    </location>
    <ligand>
        <name>Zn(2+)</name>
        <dbReference type="ChEBI" id="CHEBI:29105"/>
    </ligand>
</feature>
<name>PYRI_VIBS2</name>
<sequence>MKSNHMQVEAICNGYVIDHIPSGQGVKILRLFSLTDTKQRVTVGFNLPSHDGTTKDLIKVENTEITKSQANQLALLAPNATVNIIENFKVTDKHSLALPKEVENVFPCPNSNCITHGEPVISSFTIKMIKGNIGLKCKYCEKTFSKEIVTAQV</sequence>
<gene>
    <name type="primary">pyrI</name>
</gene>
<evidence type="ECO:0000250" key="1"/>
<evidence type="ECO:0000305" key="2"/>
<dbReference type="EMBL" id="Y09786">
    <property type="protein sequence ID" value="CAA70924.1"/>
    <property type="molecule type" value="Genomic_DNA"/>
</dbReference>
<dbReference type="PIR" id="T48883">
    <property type="entry name" value="T48883"/>
</dbReference>
<dbReference type="SMR" id="P96175"/>
<dbReference type="GO" id="GO:0009347">
    <property type="term" value="C:aspartate carbamoyltransferase complex"/>
    <property type="evidence" value="ECO:0007669"/>
    <property type="project" value="InterPro"/>
</dbReference>
<dbReference type="GO" id="GO:0046872">
    <property type="term" value="F:metal ion binding"/>
    <property type="evidence" value="ECO:0007669"/>
    <property type="project" value="UniProtKB-KW"/>
</dbReference>
<dbReference type="GO" id="GO:0006207">
    <property type="term" value="P:'de novo' pyrimidine nucleobase biosynthetic process"/>
    <property type="evidence" value="ECO:0007669"/>
    <property type="project" value="InterPro"/>
</dbReference>
<dbReference type="GO" id="GO:0006221">
    <property type="term" value="P:pyrimidine nucleotide biosynthetic process"/>
    <property type="evidence" value="ECO:0007669"/>
    <property type="project" value="UniProtKB-UniRule"/>
</dbReference>
<dbReference type="Gene3D" id="2.30.30.20">
    <property type="entry name" value="Aspartate carbamoyltransferase regulatory subunit, C-terminal domain"/>
    <property type="match status" value="1"/>
</dbReference>
<dbReference type="Gene3D" id="3.30.70.140">
    <property type="entry name" value="Aspartate carbamoyltransferase regulatory subunit, N-terminal domain"/>
    <property type="match status" value="1"/>
</dbReference>
<dbReference type="HAMAP" id="MF_00002">
    <property type="entry name" value="Asp_carb_tr_reg"/>
    <property type="match status" value="1"/>
</dbReference>
<dbReference type="InterPro" id="IPR020545">
    <property type="entry name" value="Asp_carbamoyltransf_reg_N"/>
</dbReference>
<dbReference type="InterPro" id="IPR002801">
    <property type="entry name" value="Asp_carbamoylTrfase_reg"/>
</dbReference>
<dbReference type="InterPro" id="IPR020542">
    <property type="entry name" value="Asp_carbamoyltrfase_reg_C"/>
</dbReference>
<dbReference type="InterPro" id="IPR036792">
    <property type="entry name" value="Asp_carbatrfase_reg_C_sf"/>
</dbReference>
<dbReference type="InterPro" id="IPR036793">
    <property type="entry name" value="Asp_carbatrfase_reg_N_sf"/>
</dbReference>
<dbReference type="NCBIfam" id="TIGR00240">
    <property type="entry name" value="ATCase_reg"/>
    <property type="match status" value="1"/>
</dbReference>
<dbReference type="PANTHER" id="PTHR35805">
    <property type="entry name" value="ASPARTATE CARBAMOYLTRANSFERASE REGULATORY CHAIN"/>
    <property type="match status" value="1"/>
</dbReference>
<dbReference type="PANTHER" id="PTHR35805:SF1">
    <property type="entry name" value="ASPARTATE CARBAMOYLTRANSFERASE REGULATORY CHAIN"/>
    <property type="match status" value="1"/>
</dbReference>
<dbReference type="Pfam" id="PF01948">
    <property type="entry name" value="PyrI"/>
    <property type="match status" value="1"/>
</dbReference>
<dbReference type="Pfam" id="PF02748">
    <property type="entry name" value="PyrI_C"/>
    <property type="match status" value="1"/>
</dbReference>
<dbReference type="SUPFAM" id="SSF57825">
    <property type="entry name" value="Aspartate carbamoyltransferase, Regulatory-chain, C-terminal domain"/>
    <property type="match status" value="1"/>
</dbReference>
<dbReference type="SUPFAM" id="SSF54893">
    <property type="entry name" value="Aspartate carbamoyltransferase, Regulatory-chain, N-terminal domain"/>
    <property type="match status" value="1"/>
</dbReference>
<reference key="1">
    <citation type="journal article" date="1998" name="Microbiology">
        <title>Aspartate carbamoyltransferase from a psychrophilic deep-sea bacterium, Vibrio strain 2693: properties of the enzyme, genetic organization and synthesis in Escherichia coli.</title>
        <authorList>
            <person name="Xu Y."/>
            <person name="Zhang Y."/>
            <person name="Liang Z."/>
            <person name="Van de Casteele M."/>
            <person name="Legrain C."/>
            <person name="Glansdorff N."/>
        </authorList>
    </citation>
    <scope>NUCLEOTIDE SEQUENCE [GENOMIC DNA]</scope>
</reference>
<proteinExistence type="inferred from homology"/>